<gene>
    <name type="ordered locus">At3g24513</name>
    <name type="ORF">MOB24</name>
</gene>
<comment type="subcellular location">
    <subcellularLocation>
        <location evidence="1">Secreted</location>
    </subcellularLocation>
</comment>
<comment type="similarity">
    <text evidence="3">Belongs to the DEFL family.</text>
</comment>
<comment type="caution">
    <text evidence="3">Lacks 1 of the 4 disulfide bonds, which are conserved features of the family.</text>
</comment>
<proteinExistence type="inferred from homology"/>
<name>DF258_ARATH</name>
<accession>Q2V3S7</accession>
<evidence type="ECO:0000250" key="1"/>
<evidence type="ECO:0000255" key="2"/>
<evidence type="ECO:0000305" key="3"/>
<protein>
    <recommendedName>
        <fullName>Putative defensin-like protein 258</fullName>
    </recommendedName>
</protein>
<feature type="signal peptide" evidence="2">
    <location>
        <begin position="1"/>
        <end position="25"/>
    </location>
</feature>
<feature type="chain" id="PRO_0000379721" description="Putative defensin-like protein 258">
    <location>
        <begin position="26"/>
        <end position="85"/>
    </location>
</feature>
<feature type="disulfide bond" evidence="1">
    <location>
        <begin position="57"/>
        <end position="75"/>
    </location>
</feature>
<feature type="disulfide bond" evidence="1">
    <location>
        <begin position="63"/>
        <end position="82"/>
    </location>
</feature>
<feature type="disulfide bond" evidence="1">
    <location>
        <begin position="67"/>
        <end position="84"/>
    </location>
</feature>
<organism>
    <name type="scientific">Arabidopsis thaliana</name>
    <name type="common">Mouse-ear cress</name>
    <dbReference type="NCBI Taxonomy" id="3702"/>
    <lineage>
        <taxon>Eukaryota</taxon>
        <taxon>Viridiplantae</taxon>
        <taxon>Streptophyta</taxon>
        <taxon>Embryophyta</taxon>
        <taxon>Tracheophyta</taxon>
        <taxon>Spermatophyta</taxon>
        <taxon>Magnoliopsida</taxon>
        <taxon>eudicotyledons</taxon>
        <taxon>Gunneridae</taxon>
        <taxon>Pentapetalae</taxon>
        <taxon>rosids</taxon>
        <taxon>malvids</taxon>
        <taxon>Brassicales</taxon>
        <taxon>Brassicaceae</taxon>
        <taxon>Camelineae</taxon>
        <taxon>Arabidopsis</taxon>
    </lineage>
</organism>
<dbReference type="EMBL" id="AB020746">
    <property type="status" value="NOT_ANNOTATED_CDS"/>
    <property type="molecule type" value="Genomic_DNA"/>
</dbReference>
<dbReference type="EMBL" id="CP002686">
    <property type="protein sequence ID" value="AEE76911.1"/>
    <property type="molecule type" value="Genomic_DNA"/>
</dbReference>
<dbReference type="RefSeq" id="NP_001030760.1">
    <property type="nucleotide sequence ID" value="NM_001035683.1"/>
</dbReference>
<dbReference type="SMR" id="Q2V3S7"/>
<dbReference type="iPTMnet" id="Q2V3S7"/>
<dbReference type="PaxDb" id="3702-AT3G24513.1"/>
<dbReference type="EnsemblPlants" id="AT3G24513.1">
    <property type="protein sequence ID" value="AT3G24513.1"/>
    <property type="gene ID" value="AT3G24513"/>
</dbReference>
<dbReference type="GeneID" id="3768920"/>
<dbReference type="Gramene" id="AT3G24513.1">
    <property type="protein sequence ID" value="AT3G24513.1"/>
    <property type="gene ID" value="AT3G24513"/>
</dbReference>
<dbReference type="KEGG" id="ath:AT3G24513"/>
<dbReference type="Araport" id="AT3G24513"/>
<dbReference type="TAIR" id="AT3G24513"/>
<dbReference type="HOGENOM" id="CLU_2530542_0_0_1"/>
<dbReference type="InParanoid" id="Q2V3S7"/>
<dbReference type="OMA" id="QCPRIQG"/>
<dbReference type="PhylomeDB" id="Q2V3S7"/>
<dbReference type="PRO" id="PR:Q2V3S7"/>
<dbReference type="Proteomes" id="UP000006548">
    <property type="component" value="Chromosome 3"/>
</dbReference>
<dbReference type="ExpressionAtlas" id="Q2V3S7">
    <property type="expression patterns" value="baseline"/>
</dbReference>
<dbReference type="GO" id="GO:0005576">
    <property type="term" value="C:extracellular region"/>
    <property type="evidence" value="ECO:0007669"/>
    <property type="project" value="UniProtKB-SubCell"/>
</dbReference>
<dbReference type="GO" id="GO:0050832">
    <property type="term" value="P:defense response to fungus"/>
    <property type="evidence" value="ECO:0007669"/>
    <property type="project" value="UniProtKB-KW"/>
</dbReference>
<dbReference type="GO" id="GO:0031640">
    <property type="term" value="P:killing of cells of another organism"/>
    <property type="evidence" value="ECO:0007669"/>
    <property type="project" value="UniProtKB-KW"/>
</dbReference>
<keyword id="KW-0929">Antimicrobial</keyword>
<keyword id="KW-1015">Disulfide bond</keyword>
<keyword id="KW-0295">Fungicide</keyword>
<keyword id="KW-0611">Plant defense</keyword>
<keyword id="KW-1185">Reference proteome</keyword>
<keyword id="KW-0964">Secreted</keyword>
<keyword id="KW-0732">Signal</keyword>
<sequence length="85" mass="9287">MINVSLKRSLLIFISVITSNIGSEARELTGAGKKLEVATRSSNYAGTARTLLQARPCQRDVDCNFQCPRIQGGQCNNHHGTCDCF</sequence>
<reference key="1">
    <citation type="journal article" date="2000" name="DNA Res.">
        <title>Structural analysis of Arabidopsis thaliana chromosome 3. II. Sequence features of the 4,251,695 bp regions covered by 90 P1, TAC and BAC clones.</title>
        <authorList>
            <person name="Kaneko T."/>
            <person name="Katoh T."/>
            <person name="Sato S."/>
            <person name="Nakamura Y."/>
            <person name="Asamizu E."/>
            <person name="Tabata S."/>
        </authorList>
    </citation>
    <scope>NUCLEOTIDE SEQUENCE [LARGE SCALE GENOMIC DNA]</scope>
    <source>
        <strain>cv. Columbia</strain>
    </source>
</reference>
<reference key="2">
    <citation type="journal article" date="2017" name="Plant J.">
        <title>Araport11: a complete reannotation of the Arabidopsis thaliana reference genome.</title>
        <authorList>
            <person name="Cheng C.Y."/>
            <person name="Krishnakumar V."/>
            <person name="Chan A.P."/>
            <person name="Thibaud-Nissen F."/>
            <person name="Schobel S."/>
            <person name="Town C.D."/>
        </authorList>
    </citation>
    <scope>GENOME REANNOTATION</scope>
    <source>
        <strain>cv. Columbia</strain>
    </source>
</reference>
<reference key="3">
    <citation type="journal article" date="2005" name="Plant Physiol.">
        <title>Genome organization of more than 300 defensin-like genes in Arabidopsis.</title>
        <authorList>
            <person name="Silverstein K.A.T."/>
            <person name="Graham M.A."/>
            <person name="Paape T.D."/>
            <person name="VandenBosch K.A."/>
        </authorList>
    </citation>
    <scope>GENE FAMILY</scope>
</reference>